<name>PURA_PROMS</name>
<organism>
    <name type="scientific">Prochlorococcus marinus (strain AS9601)</name>
    <dbReference type="NCBI Taxonomy" id="146891"/>
    <lineage>
        <taxon>Bacteria</taxon>
        <taxon>Bacillati</taxon>
        <taxon>Cyanobacteriota</taxon>
        <taxon>Cyanophyceae</taxon>
        <taxon>Synechococcales</taxon>
        <taxon>Prochlorococcaceae</taxon>
        <taxon>Prochlorococcus</taxon>
    </lineage>
</organism>
<evidence type="ECO:0000255" key="1">
    <source>
        <dbReference type="HAMAP-Rule" id="MF_00011"/>
    </source>
</evidence>
<gene>
    <name evidence="1" type="primary">purA</name>
    <name type="ordered locus">A9601_05631</name>
</gene>
<dbReference type="EC" id="6.3.4.4" evidence="1"/>
<dbReference type="EMBL" id="CP000551">
    <property type="protein sequence ID" value="ABM69849.1"/>
    <property type="molecule type" value="Genomic_DNA"/>
</dbReference>
<dbReference type="RefSeq" id="WP_011818015.1">
    <property type="nucleotide sequence ID" value="NC_008816.1"/>
</dbReference>
<dbReference type="SMR" id="A2BPY8"/>
<dbReference type="STRING" id="146891.A9601_05631"/>
<dbReference type="KEGG" id="pmb:A9601_05631"/>
<dbReference type="eggNOG" id="COG0104">
    <property type="taxonomic scope" value="Bacteria"/>
</dbReference>
<dbReference type="HOGENOM" id="CLU_029848_0_0_3"/>
<dbReference type="OrthoDB" id="9807553at2"/>
<dbReference type="UniPathway" id="UPA00075">
    <property type="reaction ID" value="UER00335"/>
</dbReference>
<dbReference type="Proteomes" id="UP000002590">
    <property type="component" value="Chromosome"/>
</dbReference>
<dbReference type="GO" id="GO:0005737">
    <property type="term" value="C:cytoplasm"/>
    <property type="evidence" value="ECO:0007669"/>
    <property type="project" value="UniProtKB-SubCell"/>
</dbReference>
<dbReference type="GO" id="GO:0004019">
    <property type="term" value="F:adenylosuccinate synthase activity"/>
    <property type="evidence" value="ECO:0007669"/>
    <property type="project" value="UniProtKB-UniRule"/>
</dbReference>
<dbReference type="GO" id="GO:0005525">
    <property type="term" value="F:GTP binding"/>
    <property type="evidence" value="ECO:0007669"/>
    <property type="project" value="UniProtKB-UniRule"/>
</dbReference>
<dbReference type="GO" id="GO:0000287">
    <property type="term" value="F:magnesium ion binding"/>
    <property type="evidence" value="ECO:0007669"/>
    <property type="project" value="UniProtKB-UniRule"/>
</dbReference>
<dbReference type="GO" id="GO:0044208">
    <property type="term" value="P:'de novo' AMP biosynthetic process"/>
    <property type="evidence" value="ECO:0007669"/>
    <property type="project" value="UniProtKB-UniRule"/>
</dbReference>
<dbReference type="GO" id="GO:0046040">
    <property type="term" value="P:IMP metabolic process"/>
    <property type="evidence" value="ECO:0007669"/>
    <property type="project" value="TreeGrafter"/>
</dbReference>
<dbReference type="CDD" id="cd03108">
    <property type="entry name" value="AdSS"/>
    <property type="match status" value="1"/>
</dbReference>
<dbReference type="FunFam" id="1.10.300.10:FF:000001">
    <property type="entry name" value="Adenylosuccinate synthetase"/>
    <property type="match status" value="1"/>
</dbReference>
<dbReference type="FunFam" id="3.90.170.10:FF:000001">
    <property type="entry name" value="Adenylosuccinate synthetase"/>
    <property type="match status" value="1"/>
</dbReference>
<dbReference type="Gene3D" id="3.40.440.10">
    <property type="entry name" value="Adenylosuccinate Synthetase, subunit A, domain 1"/>
    <property type="match status" value="1"/>
</dbReference>
<dbReference type="Gene3D" id="1.10.300.10">
    <property type="entry name" value="Adenylosuccinate Synthetase, subunit A, domain 2"/>
    <property type="match status" value="1"/>
</dbReference>
<dbReference type="Gene3D" id="3.90.170.10">
    <property type="entry name" value="Adenylosuccinate Synthetase, subunit A, domain 3"/>
    <property type="match status" value="1"/>
</dbReference>
<dbReference type="HAMAP" id="MF_00011">
    <property type="entry name" value="Adenylosucc_synth"/>
    <property type="match status" value="1"/>
</dbReference>
<dbReference type="InterPro" id="IPR018220">
    <property type="entry name" value="Adenylosuccin_syn_GTP-bd"/>
</dbReference>
<dbReference type="InterPro" id="IPR033128">
    <property type="entry name" value="Adenylosuccin_syn_Lys_AS"/>
</dbReference>
<dbReference type="InterPro" id="IPR042109">
    <property type="entry name" value="Adenylosuccinate_synth_dom1"/>
</dbReference>
<dbReference type="InterPro" id="IPR042110">
    <property type="entry name" value="Adenylosuccinate_synth_dom2"/>
</dbReference>
<dbReference type="InterPro" id="IPR042111">
    <property type="entry name" value="Adenylosuccinate_synth_dom3"/>
</dbReference>
<dbReference type="InterPro" id="IPR001114">
    <property type="entry name" value="Adenylosuccinate_synthetase"/>
</dbReference>
<dbReference type="InterPro" id="IPR027417">
    <property type="entry name" value="P-loop_NTPase"/>
</dbReference>
<dbReference type="NCBIfam" id="NF002223">
    <property type="entry name" value="PRK01117.1"/>
    <property type="match status" value="1"/>
</dbReference>
<dbReference type="NCBIfam" id="TIGR00184">
    <property type="entry name" value="purA"/>
    <property type="match status" value="1"/>
</dbReference>
<dbReference type="PANTHER" id="PTHR11846">
    <property type="entry name" value="ADENYLOSUCCINATE SYNTHETASE"/>
    <property type="match status" value="1"/>
</dbReference>
<dbReference type="PANTHER" id="PTHR11846:SF0">
    <property type="entry name" value="ADENYLOSUCCINATE SYNTHETASE"/>
    <property type="match status" value="1"/>
</dbReference>
<dbReference type="Pfam" id="PF00709">
    <property type="entry name" value="Adenylsucc_synt"/>
    <property type="match status" value="1"/>
</dbReference>
<dbReference type="SMART" id="SM00788">
    <property type="entry name" value="Adenylsucc_synt"/>
    <property type="match status" value="1"/>
</dbReference>
<dbReference type="SUPFAM" id="SSF52540">
    <property type="entry name" value="P-loop containing nucleoside triphosphate hydrolases"/>
    <property type="match status" value="1"/>
</dbReference>
<dbReference type="PROSITE" id="PS01266">
    <property type="entry name" value="ADENYLOSUCCIN_SYN_1"/>
    <property type="match status" value="1"/>
</dbReference>
<dbReference type="PROSITE" id="PS00513">
    <property type="entry name" value="ADENYLOSUCCIN_SYN_2"/>
    <property type="match status" value="1"/>
</dbReference>
<protein>
    <recommendedName>
        <fullName evidence="1">Adenylosuccinate synthetase</fullName>
        <shortName evidence="1">AMPSase</shortName>
        <shortName evidence="1">AdSS</shortName>
        <ecNumber evidence="1">6.3.4.4</ecNumber>
    </recommendedName>
    <alternativeName>
        <fullName evidence="1">IMP--aspartate ligase</fullName>
    </alternativeName>
</protein>
<proteinExistence type="inferred from homology"/>
<sequence>MANVVVIGAQWGDEGKGKITDLLSRSADVVVRYQGGVNAGHTIVVDDKVLKLHLIPSGILYKNTSCLIGSGTVIDPKILLKEIDMLIDNGIDISGLKISSTSHVTMPYHRILDEAMEADRGSNKIGTTGRGIGPTYADKSQRNGIRIRDLLNKERLSDVIEIPLREKNGLLEKIYGIKPLKLEDIVEEYLDYGERLSKHVVDCTRTIHAASKNKKNILFEGAQGTLLDLDHGTYPFVTSSNPISGGACIGAGVGPTLIDRVIGVAKAYTTRVGEGPFPTELQGSINDQLCDRGSEFGTTTGRRRRCGWFDGVIGKYAVSVNGLDCLAVTKLDVLDELDEIQVCIAYDLNGEEIDYFPTNSDDLKKCKPIFKKLKGWQCSTADCRKLSDLPENAMNYLRFLAELMEVPIAIVSLGANRDQTIVIEDPIHGPKRALLR</sequence>
<feature type="chain" id="PRO_1000000892" description="Adenylosuccinate synthetase">
    <location>
        <begin position="1"/>
        <end position="436"/>
    </location>
</feature>
<feature type="active site" description="Proton acceptor" evidence="1">
    <location>
        <position position="13"/>
    </location>
</feature>
<feature type="active site" description="Proton donor" evidence="1">
    <location>
        <position position="41"/>
    </location>
</feature>
<feature type="binding site" evidence="1">
    <location>
        <begin position="12"/>
        <end position="18"/>
    </location>
    <ligand>
        <name>GTP</name>
        <dbReference type="ChEBI" id="CHEBI:37565"/>
    </ligand>
</feature>
<feature type="binding site" description="in other chain" evidence="1">
    <location>
        <begin position="13"/>
        <end position="16"/>
    </location>
    <ligand>
        <name>IMP</name>
        <dbReference type="ChEBI" id="CHEBI:58053"/>
        <note>ligand shared between dimeric partners</note>
    </ligand>
</feature>
<feature type="binding site" evidence="1">
    <location>
        <position position="13"/>
    </location>
    <ligand>
        <name>Mg(2+)</name>
        <dbReference type="ChEBI" id="CHEBI:18420"/>
    </ligand>
</feature>
<feature type="binding site" description="in other chain" evidence="1">
    <location>
        <begin position="38"/>
        <end position="41"/>
    </location>
    <ligand>
        <name>IMP</name>
        <dbReference type="ChEBI" id="CHEBI:58053"/>
        <note>ligand shared between dimeric partners</note>
    </ligand>
</feature>
<feature type="binding site" evidence="1">
    <location>
        <begin position="40"/>
        <end position="42"/>
    </location>
    <ligand>
        <name>GTP</name>
        <dbReference type="ChEBI" id="CHEBI:37565"/>
    </ligand>
</feature>
<feature type="binding site" evidence="1">
    <location>
        <position position="40"/>
    </location>
    <ligand>
        <name>Mg(2+)</name>
        <dbReference type="ChEBI" id="CHEBI:18420"/>
    </ligand>
</feature>
<feature type="binding site" description="in other chain" evidence="1">
    <location>
        <position position="128"/>
    </location>
    <ligand>
        <name>IMP</name>
        <dbReference type="ChEBI" id="CHEBI:58053"/>
        <note>ligand shared between dimeric partners</note>
    </ligand>
</feature>
<feature type="binding site" evidence="1">
    <location>
        <position position="142"/>
    </location>
    <ligand>
        <name>IMP</name>
        <dbReference type="ChEBI" id="CHEBI:58053"/>
        <note>ligand shared between dimeric partners</note>
    </ligand>
</feature>
<feature type="binding site" description="in other chain" evidence="1">
    <location>
        <position position="223"/>
    </location>
    <ligand>
        <name>IMP</name>
        <dbReference type="ChEBI" id="CHEBI:58053"/>
        <note>ligand shared between dimeric partners</note>
    </ligand>
</feature>
<feature type="binding site" description="in other chain" evidence="1">
    <location>
        <position position="238"/>
    </location>
    <ligand>
        <name>IMP</name>
        <dbReference type="ChEBI" id="CHEBI:58053"/>
        <note>ligand shared between dimeric partners</note>
    </ligand>
</feature>
<feature type="binding site" evidence="1">
    <location>
        <begin position="298"/>
        <end position="304"/>
    </location>
    <ligand>
        <name>substrate</name>
    </ligand>
</feature>
<feature type="binding site" description="in other chain" evidence="1">
    <location>
        <position position="302"/>
    </location>
    <ligand>
        <name>IMP</name>
        <dbReference type="ChEBI" id="CHEBI:58053"/>
        <note>ligand shared between dimeric partners</note>
    </ligand>
</feature>
<feature type="binding site" evidence="1">
    <location>
        <position position="304"/>
    </location>
    <ligand>
        <name>GTP</name>
        <dbReference type="ChEBI" id="CHEBI:37565"/>
    </ligand>
</feature>
<feature type="binding site" evidence="1">
    <location>
        <begin position="330"/>
        <end position="332"/>
    </location>
    <ligand>
        <name>GTP</name>
        <dbReference type="ChEBI" id="CHEBI:37565"/>
    </ligand>
</feature>
<feature type="binding site" evidence="1">
    <location>
        <begin position="412"/>
        <end position="414"/>
    </location>
    <ligand>
        <name>GTP</name>
        <dbReference type="ChEBI" id="CHEBI:37565"/>
    </ligand>
</feature>
<comment type="function">
    <text evidence="1">Plays an important role in the de novo pathway of purine nucleotide biosynthesis. Catalyzes the first committed step in the biosynthesis of AMP from IMP.</text>
</comment>
<comment type="catalytic activity">
    <reaction evidence="1">
        <text>IMP + L-aspartate + GTP = N(6)-(1,2-dicarboxyethyl)-AMP + GDP + phosphate + 2 H(+)</text>
        <dbReference type="Rhea" id="RHEA:15753"/>
        <dbReference type="ChEBI" id="CHEBI:15378"/>
        <dbReference type="ChEBI" id="CHEBI:29991"/>
        <dbReference type="ChEBI" id="CHEBI:37565"/>
        <dbReference type="ChEBI" id="CHEBI:43474"/>
        <dbReference type="ChEBI" id="CHEBI:57567"/>
        <dbReference type="ChEBI" id="CHEBI:58053"/>
        <dbReference type="ChEBI" id="CHEBI:58189"/>
        <dbReference type="EC" id="6.3.4.4"/>
    </reaction>
</comment>
<comment type="cofactor">
    <cofactor evidence="1">
        <name>Mg(2+)</name>
        <dbReference type="ChEBI" id="CHEBI:18420"/>
    </cofactor>
    <text evidence="1">Binds 1 Mg(2+) ion per subunit.</text>
</comment>
<comment type="pathway">
    <text evidence="1">Purine metabolism; AMP biosynthesis via de novo pathway; AMP from IMP: step 1/2.</text>
</comment>
<comment type="subunit">
    <text evidence="1">Homodimer.</text>
</comment>
<comment type="subcellular location">
    <subcellularLocation>
        <location evidence="1">Cytoplasm</location>
    </subcellularLocation>
</comment>
<comment type="similarity">
    <text evidence="1">Belongs to the adenylosuccinate synthetase family.</text>
</comment>
<keyword id="KW-0963">Cytoplasm</keyword>
<keyword id="KW-0342">GTP-binding</keyword>
<keyword id="KW-0436">Ligase</keyword>
<keyword id="KW-0460">Magnesium</keyword>
<keyword id="KW-0479">Metal-binding</keyword>
<keyword id="KW-0547">Nucleotide-binding</keyword>
<keyword id="KW-0658">Purine biosynthesis</keyword>
<accession>A2BPY8</accession>
<reference key="1">
    <citation type="journal article" date="2007" name="PLoS Genet.">
        <title>Patterns and implications of gene gain and loss in the evolution of Prochlorococcus.</title>
        <authorList>
            <person name="Kettler G.C."/>
            <person name="Martiny A.C."/>
            <person name="Huang K."/>
            <person name="Zucker J."/>
            <person name="Coleman M.L."/>
            <person name="Rodrigue S."/>
            <person name="Chen F."/>
            <person name="Lapidus A."/>
            <person name="Ferriera S."/>
            <person name="Johnson J."/>
            <person name="Steglich C."/>
            <person name="Church G.M."/>
            <person name="Richardson P."/>
            <person name="Chisholm S.W."/>
        </authorList>
    </citation>
    <scope>NUCLEOTIDE SEQUENCE [LARGE SCALE GENOMIC DNA]</scope>
    <source>
        <strain>AS9601</strain>
    </source>
</reference>